<accession>B8MDC1</accession>
<evidence type="ECO:0000250" key="1"/>
<evidence type="ECO:0000255" key="2"/>
<evidence type="ECO:0000305" key="3"/>
<reference key="1">
    <citation type="journal article" date="2015" name="Genome Announc.">
        <title>Genome sequence of the AIDS-associated pathogen Penicillium marneffei (ATCC18224) and its near taxonomic relative Talaromyces stipitatus (ATCC10500).</title>
        <authorList>
            <person name="Nierman W.C."/>
            <person name="Fedorova-Abrams N.D."/>
            <person name="Andrianopoulos A."/>
        </authorList>
    </citation>
    <scope>NUCLEOTIDE SEQUENCE [LARGE SCALE GENOMIC DNA]</scope>
    <source>
        <strain>ATCC 10500 / CBS 375.48 / QM 6759 / NRRL 1006</strain>
    </source>
</reference>
<protein>
    <recommendedName>
        <fullName>Altered inheritance of mitochondria protein 24, mitochondrial</fullName>
    </recommendedName>
</protein>
<comment type="subcellular location">
    <subcellularLocation>
        <location evidence="1">Mitochondrion</location>
    </subcellularLocation>
</comment>
<comment type="similarity">
    <text evidence="3">Belongs to the AIM24 family.</text>
</comment>
<keyword id="KW-0496">Mitochondrion</keyword>
<keyword id="KW-1185">Reference proteome</keyword>
<keyword id="KW-0809">Transit peptide</keyword>
<feature type="transit peptide" description="Mitochondrion" evidence="2">
    <location>
        <begin position="1"/>
        <end position="33"/>
    </location>
</feature>
<feature type="chain" id="PRO_0000399593" description="Altered inheritance of mitochondria protein 24, mitochondrial">
    <location>
        <begin position="34"/>
        <end position="415"/>
    </location>
</feature>
<sequence length="415" mass="45318">MRLTLGKGATAVYRARAGVSVSSPLYRRHGVRNVQIKAAPLGEPTIVNGVNLPISSTPSSASSADAKFHVVGTPYSMLSVSLSASQNLYTQRGTLVGLSGKADNVISTLSVLEPSRRAIVGIPFLYQKISSPSPIKALVSVRSPVTSFAVVHLDGTVDWMVAQRRALLAWTGHSLKIKPRINTNLSVTNWGSSEVTGRGLLALVGRGQVYSVELKAGEQYIAHPSNIVAYTLSSTRPQPYRFKSTTLRFQIPGLQIPELLLKSRYVRDLTASDTWKASMKLIHNFRTWARRTIWGDRLFLQFNGPATLLIQSRGARVRDIMSDKEVNEIADTPTGATLDAINKLEARTSPSTNENDKIDYQRAAEEAVSQAPGPSRTVEGLTQEIKGVSQTIATIRDGKVEFEKLKQQNAEIARK</sequence>
<name>AIM24_TALSN</name>
<gene>
    <name type="primary">aim24</name>
    <name type="ORF">TSTA_114550</name>
</gene>
<organism>
    <name type="scientific">Talaromyces stipitatus (strain ATCC 10500 / CBS 375.48 / QM 6759 / NRRL 1006)</name>
    <name type="common">Penicillium stipitatum</name>
    <dbReference type="NCBI Taxonomy" id="441959"/>
    <lineage>
        <taxon>Eukaryota</taxon>
        <taxon>Fungi</taxon>
        <taxon>Dikarya</taxon>
        <taxon>Ascomycota</taxon>
        <taxon>Pezizomycotina</taxon>
        <taxon>Eurotiomycetes</taxon>
        <taxon>Eurotiomycetidae</taxon>
        <taxon>Eurotiales</taxon>
        <taxon>Trichocomaceae</taxon>
        <taxon>Talaromyces</taxon>
        <taxon>Talaromyces sect. Talaromyces</taxon>
    </lineage>
</organism>
<proteinExistence type="inferred from homology"/>
<dbReference type="EMBL" id="EQ962655">
    <property type="protein sequence ID" value="EED17646.1"/>
    <property type="molecule type" value="Genomic_DNA"/>
</dbReference>
<dbReference type="RefSeq" id="XP_002481638.1">
    <property type="nucleotide sequence ID" value="XM_002481593.1"/>
</dbReference>
<dbReference type="STRING" id="441959.B8MDC1"/>
<dbReference type="GeneID" id="8109217"/>
<dbReference type="VEuPathDB" id="FungiDB:TSTA_114550"/>
<dbReference type="eggNOG" id="ENOG502RXC5">
    <property type="taxonomic scope" value="Eukaryota"/>
</dbReference>
<dbReference type="HOGENOM" id="CLU_046558_0_0_1"/>
<dbReference type="InParanoid" id="B8MDC1"/>
<dbReference type="OMA" id="QTRCVQI"/>
<dbReference type="OrthoDB" id="5295771at2759"/>
<dbReference type="PhylomeDB" id="B8MDC1"/>
<dbReference type="Proteomes" id="UP000001745">
    <property type="component" value="Unassembled WGS sequence"/>
</dbReference>
<dbReference type="GO" id="GO:0005743">
    <property type="term" value="C:mitochondrial inner membrane"/>
    <property type="evidence" value="ECO:0007669"/>
    <property type="project" value="TreeGrafter"/>
</dbReference>
<dbReference type="GO" id="GO:0007007">
    <property type="term" value="P:inner mitochondrial membrane organization"/>
    <property type="evidence" value="ECO:0007669"/>
    <property type="project" value="TreeGrafter"/>
</dbReference>
<dbReference type="FunFam" id="3.60.160.10:FF:000001">
    <property type="entry name" value="Altered inheritance of mitochondria protein 24, mitochondrial"/>
    <property type="match status" value="1"/>
</dbReference>
<dbReference type="Gene3D" id="3.60.160.10">
    <property type="entry name" value="Mitochondrial biogenesis AIM24"/>
    <property type="match status" value="1"/>
</dbReference>
<dbReference type="InterPro" id="IPR002838">
    <property type="entry name" value="AIM24"/>
</dbReference>
<dbReference type="InterPro" id="IPR036983">
    <property type="entry name" value="AIM24_sf"/>
</dbReference>
<dbReference type="InterPro" id="IPR016031">
    <property type="entry name" value="Trp_RNA-bd_attenuator-like_dom"/>
</dbReference>
<dbReference type="PANTHER" id="PTHR36959">
    <property type="entry name" value="ALTERED INHERITANCE OF MITOCHONDRIA PROTEIN 24, MITOCHONDRIAL"/>
    <property type="match status" value="1"/>
</dbReference>
<dbReference type="PANTHER" id="PTHR36959:SF2">
    <property type="entry name" value="ALTERED INHERITANCE OF MITOCHONDRIA PROTEIN 24, MITOCHONDRIAL"/>
    <property type="match status" value="1"/>
</dbReference>
<dbReference type="Pfam" id="PF01987">
    <property type="entry name" value="AIM24"/>
    <property type="match status" value="1"/>
</dbReference>
<dbReference type="SUPFAM" id="SSF51219">
    <property type="entry name" value="TRAP-like"/>
    <property type="match status" value="1"/>
</dbReference>